<sequence length="239" mass="26556">MKPHLHQISQIKLWAIIPAAGSGSRFSKTALKQYQTIENKTVLEHTVERLNGLTLEGYVLAINEHDHVAQNLPLTQKHKAHFCKGGLERVDSVLNALQYLSSIASDEDYVLVHDAARPCVSLSCLQALAEYAIKYTTNAILAIPVRDTLKQVVDRSHISKTIDRNHLWQAQTPQIAKIGVLKHAIQLALENNIKITDEASALEYAGAVVDVVQGRSDNIKITYQDDLELARLILLSQKS</sequence>
<name>ISPD_ACIAD</name>
<dbReference type="EC" id="2.7.7.60" evidence="1"/>
<dbReference type="EMBL" id="CR543861">
    <property type="protein sequence ID" value="CAG68822.1"/>
    <property type="molecule type" value="Genomic_DNA"/>
</dbReference>
<dbReference type="RefSeq" id="WP_004927344.1">
    <property type="nucleotide sequence ID" value="NC_005966.1"/>
</dbReference>
<dbReference type="SMR" id="Q6FAU1"/>
<dbReference type="STRING" id="202950.GCA_001485005_00372"/>
<dbReference type="GeneID" id="45234359"/>
<dbReference type="KEGG" id="aci:ACIAD1999"/>
<dbReference type="eggNOG" id="COG1211">
    <property type="taxonomic scope" value="Bacteria"/>
</dbReference>
<dbReference type="HOGENOM" id="CLU_061281_3_1_6"/>
<dbReference type="OrthoDB" id="9806837at2"/>
<dbReference type="BioCyc" id="ASP62977:ACIAD_RS09200-MONOMER"/>
<dbReference type="UniPathway" id="UPA00056">
    <property type="reaction ID" value="UER00093"/>
</dbReference>
<dbReference type="Proteomes" id="UP000000430">
    <property type="component" value="Chromosome"/>
</dbReference>
<dbReference type="GO" id="GO:0050518">
    <property type="term" value="F:2-C-methyl-D-erythritol 4-phosphate cytidylyltransferase activity"/>
    <property type="evidence" value="ECO:0007669"/>
    <property type="project" value="UniProtKB-UniRule"/>
</dbReference>
<dbReference type="GO" id="GO:0019288">
    <property type="term" value="P:isopentenyl diphosphate biosynthetic process, methylerythritol 4-phosphate pathway"/>
    <property type="evidence" value="ECO:0007669"/>
    <property type="project" value="UniProtKB-UniRule"/>
</dbReference>
<dbReference type="CDD" id="cd02516">
    <property type="entry name" value="CDP-ME_synthetase"/>
    <property type="match status" value="1"/>
</dbReference>
<dbReference type="FunFam" id="3.90.550.10:FF:000003">
    <property type="entry name" value="2-C-methyl-D-erythritol 4-phosphate cytidylyltransferase"/>
    <property type="match status" value="1"/>
</dbReference>
<dbReference type="Gene3D" id="3.90.550.10">
    <property type="entry name" value="Spore Coat Polysaccharide Biosynthesis Protein SpsA, Chain A"/>
    <property type="match status" value="1"/>
</dbReference>
<dbReference type="HAMAP" id="MF_00108">
    <property type="entry name" value="IspD"/>
    <property type="match status" value="1"/>
</dbReference>
<dbReference type="InterPro" id="IPR001228">
    <property type="entry name" value="IspD"/>
</dbReference>
<dbReference type="InterPro" id="IPR034683">
    <property type="entry name" value="IspD/TarI"/>
</dbReference>
<dbReference type="InterPro" id="IPR050088">
    <property type="entry name" value="IspD/TarI_cytidylyltransf_bact"/>
</dbReference>
<dbReference type="InterPro" id="IPR018294">
    <property type="entry name" value="ISPD_synthase_CS"/>
</dbReference>
<dbReference type="InterPro" id="IPR029044">
    <property type="entry name" value="Nucleotide-diphossugar_trans"/>
</dbReference>
<dbReference type="NCBIfam" id="TIGR00453">
    <property type="entry name" value="ispD"/>
    <property type="match status" value="1"/>
</dbReference>
<dbReference type="PANTHER" id="PTHR32125">
    <property type="entry name" value="2-C-METHYL-D-ERYTHRITOL 4-PHOSPHATE CYTIDYLYLTRANSFERASE, CHLOROPLASTIC"/>
    <property type="match status" value="1"/>
</dbReference>
<dbReference type="PANTHER" id="PTHR32125:SF4">
    <property type="entry name" value="2-C-METHYL-D-ERYTHRITOL 4-PHOSPHATE CYTIDYLYLTRANSFERASE, CHLOROPLASTIC"/>
    <property type="match status" value="1"/>
</dbReference>
<dbReference type="Pfam" id="PF01128">
    <property type="entry name" value="IspD"/>
    <property type="match status" value="1"/>
</dbReference>
<dbReference type="SUPFAM" id="SSF53448">
    <property type="entry name" value="Nucleotide-diphospho-sugar transferases"/>
    <property type="match status" value="1"/>
</dbReference>
<dbReference type="PROSITE" id="PS01295">
    <property type="entry name" value="ISPD"/>
    <property type="match status" value="1"/>
</dbReference>
<gene>
    <name evidence="1" type="primary">ispD</name>
    <name type="ordered locus">ACIAD1999</name>
</gene>
<comment type="function">
    <text evidence="1">Catalyzes the formation of 4-diphosphocytidyl-2-C-methyl-D-erythritol from CTP and 2-C-methyl-D-erythritol 4-phosphate (MEP).</text>
</comment>
<comment type="catalytic activity">
    <reaction evidence="1">
        <text>2-C-methyl-D-erythritol 4-phosphate + CTP + H(+) = 4-CDP-2-C-methyl-D-erythritol + diphosphate</text>
        <dbReference type="Rhea" id="RHEA:13429"/>
        <dbReference type="ChEBI" id="CHEBI:15378"/>
        <dbReference type="ChEBI" id="CHEBI:33019"/>
        <dbReference type="ChEBI" id="CHEBI:37563"/>
        <dbReference type="ChEBI" id="CHEBI:57823"/>
        <dbReference type="ChEBI" id="CHEBI:58262"/>
        <dbReference type="EC" id="2.7.7.60"/>
    </reaction>
</comment>
<comment type="pathway">
    <text evidence="1">Isoprenoid biosynthesis; isopentenyl diphosphate biosynthesis via DXP pathway; isopentenyl diphosphate from 1-deoxy-D-xylulose 5-phosphate: step 2/6.</text>
</comment>
<comment type="similarity">
    <text evidence="1">Belongs to the IspD/TarI cytidylyltransferase family. IspD subfamily.</text>
</comment>
<feature type="chain" id="PRO_0000075543" description="2-C-methyl-D-erythritol 4-phosphate cytidylyltransferase">
    <location>
        <begin position="1"/>
        <end position="239"/>
    </location>
</feature>
<feature type="site" description="Transition state stabilizer" evidence="1">
    <location>
        <position position="25"/>
    </location>
</feature>
<feature type="site" description="Transition state stabilizer" evidence="1">
    <location>
        <position position="32"/>
    </location>
</feature>
<feature type="site" description="Positions MEP for the nucleophilic attack" evidence="1">
    <location>
        <position position="164"/>
    </location>
</feature>
<feature type="site" description="Positions MEP for the nucleophilic attack" evidence="1">
    <location>
        <position position="220"/>
    </location>
</feature>
<accession>Q6FAU1</accession>
<evidence type="ECO:0000255" key="1">
    <source>
        <dbReference type="HAMAP-Rule" id="MF_00108"/>
    </source>
</evidence>
<reference key="1">
    <citation type="journal article" date="2004" name="Nucleic Acids Res.">
        <title>Unique features revealed by the genome sequence of Acinetobacter sp. ADP1, a versatile and naturally transformation competent bacterium.</title>
        <authorList>
            <person name="Barbe V."/>
            <person name="Vallenet D."/>
            <person name="Fonknechten N."/>
            <person name="Kreimeyer A."/>
            <person name="Oztas S."/>
            <person name="Labarre L."/>
            <person name="Cruveiller S."/>
            <person name="Robert C."/>
            <person name="Duprat S."/>
            <person name="Wincker P."/>
            <person name="Ornston L.N."/>
            <person name="Weissenbach J."/>
            <person name="Marliere P."/>
            <person name="Cohen G.N."/>
            <person name="Medigue C."/>
        </authorList>
    </citation>
    <scope>NUCLEOTIDE SEQUENCE [LARGE SCALE GENOMIC DNA]</scope>
    <source>
        <strain>ATCC 33305 / BD413 / ADP1</strain>
    </source>
</reference>
<protein>
    <recommendedName>
        <fullName evidence="1">2-C-methyl-D-erythritol 4-phosphate cytidylyltransferase</fullName>
        <ecNumber evidence="1">2.7.7.60</ecNumber>
    </recommendedName>
    <alternativeName>
        <fullName evidence="1">4-diphosphocytidyl-2C-methyl-D-erythritol synthase</fullName>
    </alternativeName>
    <alternativeName>
        <fullName evidence="1">MEP cytidylyltransferase</fullName>
        <shortName evidence="1">MCT</shortName>
    </alternativeName>
</protein>
<organism>
    <name type="scientific">Acinetobacter baylyi (strain ATCC 33305 / BD413 / ADP1)</name>
    <dbReference type="NCBI Taxonomy" id="62977"/>
    <lineage>
        <taxon>Bacteria</taxon>
        <taxon>Pseudomonadati</taxon>
        <taxon>Pseudomonadota</taxon>
        <taxon>Gammaproteobacteria</taxon>
        <taxon>Moraxellales</taxon>
        <taxon>Moraxellaceae</taxon>
        <taxon>Acinetobacter</taxon>
    </lineage>
</organism>
<keyword id="KW-0414">Isoprene biosynthesis</keyword>
<keyword id="KW-0548">Nucleotidyltransferase</keyword>
<keyword id="KW-0808">Transferase</keyword>
<proteinExistence type="inferred from homology"/>